<reference key="1">
    <citation type="journal article" date="1993" name="Plant Mol. Biol.">
        <title>Organization of plastid-encoded ATPase genes and flanking regions including homologues of infB and tsf in the thermophilic red alga Galdieria sulphuraria.</title>
        <authorList>
            <person name="Kostrzewa M."/>
            <person name="Zetsche K."/>
        </authorList>
    </citation>
    <scope>NUCLEOTIDE SEQUENCE [GENOMIC DNA]</scope>
    <source>
        <strain>14-1-1 / Isolate 107.79/Goettingen</strain>
    </source>
</reference>
<accession>P35011</accession>
<protein>
    <recommendedName>
        <fullName evidence="1">ATP synthase subunit b, chloroplastic</fullName>
    </recommendedName>
    <alternativeName>
        <fullName evidence="1">ATP synthase F(0) sector subunit b</fullName>
    </alternativeName>
    <alternativeName>
        <fullName evidence="1">ATPase subunit I</fullName>
    </alternativeName>
</protein>
<sequence length="176" mass="20338">MFFDVLGYENSQSSIKINLDLLETNIINIFILIIILIYLGRKFLGNILINRQNRVITSIRESEERLEKSTIRLNEAKNQLSSAQIIINQIKQEAKNTAANVKESILKQGKTDIERLLLNTKNYIYNTELQIKKQIKQQIAALALQKVQSKLKDELDNNIQQKIIDQSLAMLTIRNK</sequence>
<gene>
    <name evidence="1" type="primary">atpF</name>
</gene>
<comment type="function">
    <text evidence="1">F(1)F(0) ATP synthase produces ATP from ADP in the presence of a proton or sodium gradient. F-type ATPases consist of two structural domains, F(1) containing the extramembraneous catalytic core and F(0) containing the membrane proton channel, linked together by a central stalk and a peripheral stalk. During catalysis, ATP synthesis in the catalytic domain of F(1) is coupled via a rotary mechanism of the central stalk subunits to proton translocation.</text>
</comment>
<comment type="function">
    <text evidence="1">Component of the F(0) channel, it forms part of the peripheral stalk, linking F(1) to F(0).</text>
</comment>
<comment type="subunit">
    <text evidence="1">F-type ATPases have 2 components, F(1) - the catalytic core - and F(0) - the membrane proton channel. F(1) has five subunits: alpha(3), beta(3), gamma(1), delta(1), epsilon(1). F(0) has four main subunits: a(1), b(1), b'(1) and c(10-14). The alpha and beta chains form an alternating ring which encloses part of the gamma chain. F(1) is attached to F(0) by a central stalk formed by the gamma and epsilon chains, while a peripheral stalk is formed by the delta, b and b' chains.</text>
</comment>
<comment type="subcellular location">
    <subcellularLocation>
        <location evidence="1">Plastid</location>
        <location evidence="1">Chloroplast thylakoid membrane</location>
        <topology evidence="1">Single-pass membrane protein</topology>
    </subcellularLocation>
</comment>
<comment type="miscellaneous">
    <text>In plastids the F-type ATPase is also known as CF(1)CF(0).</text>
</comment>
<comment type="similarity">
    <text evidence="1">Belongs to the ATPase B chain family.</text>
</comment>
<dbReference type="EMBL" id="X67814">
    <property type="protein sequence ID" value="CAA48023.1"/>
    <property type="molecule type" value="Genomic_DNA"/>
</dbReference>
<dbReference type="SMR" id="P35011"/>
<dbReference type="GO" id="GO:0009535">
    <property type="term" value="C:chloroplast thylakoid membrane"/>
    <property type="evidence" value="ECO:0007669"/>
    <property type="project" value="UniProtKB-SubCell"/>
</dbReference>
<dbReference type="GO" id="GO:0045259">
    <property type="term" value="C:proton-transporting ATP synthase complex"/>
    <property type="evidence" value="ECO:0007669"/>
    <property type="project" value="UniProtKB-KW"/>
</dbReference>
<dbReference type="GO" id="GO:0005524">
    <property type="term" value="F:ATP binding"/>
    <property type="evidence" value="ECO:0007669"/>
    <property type="project" value="UniProtKB-KW"/>
</dbReference>
<dbReference type="GO" id="GO:0046933">
    <property type="term" value="F:proton-transporting ATP synthase activity, rotational mechanism"/>
    <property type="evidence" value="ECO:0007669"/>
    <property type="project" value="UniProtKB-UniRule"/>
</dbReference>
<dbReference type="CDD" id="cd06503">
    <property type="entry name" value="ATP-synt_Fo_b"/>
    <property type="match status" value="1"/>
</dbReference>
<dbReference type="HAMAP" id="MF_01398">
    <property type="entry name" value="ATP_synth_b_bprime"/>
    <property type="match status" value="1"/>
</dbReference>
<dbReference type="InterPro" id="IPR002146">
    <property type="entry name" value="ATP_synth_b/b'su_bac/chlpt"/>
</dbReference>
<dbReference type="NCBIfam" id="NF005606">
    <property type="entry name" value="PRK07352.1"/>
    <property type="match status" value="1"/>
</dbReference>
<dbReference type="PANTHER" id="PTHR34264">
    <property type="entry name" value="ATP SYNTHASE SUBUNIT B, CHLOROPLASTIC"/>
    <property type="match status" value="1"/>
</dbReference>
<dbReference type="PANTHER" id="PTHR34264:SF3">
    <property type="entry name" value="ATP SYNTHASE SUBUNIT B, CHLOROPLASTIC"/>
    <property type="match status" value="1"/>
</dbReference>
<dbReference type="Pfam" id="PF00430">
    <property type="entry name" value="ATP-synt_B"/>
    <property type="match status" value="1"/>
</dbReference>
<name>ATPF_GALSU</name>
<feature type="chain" id="PRO_0000082408" description="ATP synthase subunit b, chloroplastic">
    <location>
        <begin position="1"/>
        <end position="176"/>
    </location>
</feature>
<feature type="transmembrane region" description="Helical" evidence="1">
    <location>
        <begin position="19"/>
        <end position="39"/>
    </location>
</feature>
<geneLocation type="chloroplast"/>
<keyword id="KW-0066">ATP synthesis</keyword>
<keyword id="KW-0067">ATP-binding</keyword>
<keyword id="KW-0138">CF(0)</keyword>
<keyword id="KW-0150">Chloroplast</keyword>
<keyword id="KW-0375">Hydrogen ion transport</keyword>
<keyword id="KW-0406">Ion transport</keyword>
<keyword id="KW-0472">Membrane</keyword>
<keyword id="KW-0547">Nucleotide-binding</keyword>
<keyword id="KW-0934">Plastid</keyword>
<keyword id="KW-0793">Thylakoid</keyword>
<keyword id="KW-0812">Transmembrane</keyword>
<keyword id="KW-1133">Transmembrane helix</keyword>
<keyword id="KW-0813">Transport</keyword>
<evidence type="ECO:0000255" key="1">
    <source>
        <dbReference type="HAMAP-Rule" id="MF_01398"/>
    </source>
</evidence>
<proteinExistence type="inferred from homology"/>
<organism>
    <name type="scientific">Galdieria sulphuraria</name>
    <name type="common">Red alga</name>
    <dbReference type="NCBI Taxonomy" id="130081"/>
    <lineage>
        <taxon>Eukaryota</taxon>
        <taxon>Rhodophyta</taxon>
        <taxon>Bangiophyceae</taxon>
        <taxon>Galdieriales</taxon>
        <taxon>Galdieriaceae</taxon>
        <taxon>Galdieria</taxon>
    </lineage>
</organism>